<accession>Q39AP8</accession>
<keyword id="KW-0032">Aminotransferase</keyword>
<keyword id="KW-0663">Pyridoxal phosphate</keyword>
<keyword id="KW-0670">Pyruvate</keyword>
<keyword id="KW-0808">Transferase</keyword>
<proteinExistence type="inferred from homology"/>
<protein>
    <recommendedName>
        <fullName evidence="1">2-aminoethylphosphonate--pyruvate transaminase 1</fullName>
        <ecNumber evidence="1">2.6.1.37</ecNumber>
    </recommendedName>
    <alternativeName>
        <fullName evidence="1">2-aminoethylphosphonate aminotransferase 1</fullName>
    </alternativeName>
    <alternativeName>
        <fullName evidence="1">AEP transaminase 1</fullName>
        <shortName evidence="1">AEPT 1</shortName>
    </alternativeName>
</protein>
<sequence>MPDPILLTPGPLTTSATTRHAMQHDWGSWDAAFNQLTASVCADLVAIAHGGDEYVCVPMQGSGTFSVEAALGTLVPRDGVVLVPDNGAYCARILKILGRLGIEAIALPFGEDAAVDPAAIEAAFAREPRITHVAQVHLETSAGVLNPLDDIAAVCRRHGKRLIVDAMSSFGALPITLAGSGIDALISASGKCLEGVPGMGFAIVRREALDASEGNSPSLALDLHDQYAYLLKTGQWRFTPPTHVIAALRAALDQYLAEGGQPARGARYVDNCRTLVESMHALGFTTFLDASVQAPVIVTFHAPDHPAYDFRRFYDAVRDAGFILYPGKLTQLETFRVGCIGAIDSNDIRRAVAAIAQAVESLGIAVQRA</sequence>
<evidence type="ECO:0000255" key="1">
    <source>
        <dbReference type="HAMAP-Rule" id="MF_01376"/>
    </source>
</evidence>
<evidence type="ECO:0000305" key="2"/>
<feature type="chain" id="PRO_0000286766" description="2-aminoethylphosphonate--pyruvate transaminase 1">
    <location>
        <begin position="1"/>
        <end position="369"/>
    </location>
</feature>
<feature type="modified residue" description="N6-(pyridoxal phosphate)lysine" evidence="1">
    <location>
        <position position="191"/>
    </location>
</feature>
<gene>
    <name evidence="1" type="primary">phnW1</name>
    <name type="ordered locus">Bcep18194_B0347</name>
</gene>
<comment type="function">
    <text evidence="1">Involved in phosphonate degradation.</text>
</comment>
<comment type="catalytic activity">
    <reaction evidence="1">
        <text>(2-aminoethyl)phosphonate + pyruvate = phosphonoacetaldehyde + L-alanine</text>
        <dbReference type="Rhea" id="RHEA:17021"/>
        <dbReference type="ChEBI" id="CHEBI:15361"/>
        <dbReference type="ChEBI" id="CHEBI:57418"/>
        <dbReference type="ChEBI" id="CHEBI:57972"/>
        <dbReference type="ChEBI" id="CHEBI:58383"/>
        <dbReference type="EC" id="2.6.1.37"/>
    </reaction>
</comment>
<comment type="cofactor">
    <cofactor evidence="1">
        <name>pyridoxal 5'-phosphate</name>
        <dbReference type="ChEBI" id="CHEBI:597326"/>
    </cofactor>
</comment>
<comment type="subunit">
    <text evidence="1">Homodimer.</text>
</comment>
<comment type="similarity">
    <text evidence="1">Belongs to the class-V pyridoxal-phosphate-dependent aminotransferase family. PhnW subfamily.</text>
</comment>
<comment type="caution">
    <text evidence="2">The second enzyme involved in phosphonate degradation (PhnX, EC 3.11.1.1) is not found in this organism. The function of this enzyme is therefore uncertain.</text>
</comment>
<dbReference type="EC" id="2.6.1.37" evidence="1"/>
<dbReference type="EMBL" id="CP000152">
    <property type="protein sequence ID" value="ABB10463.1"/>
    <property type="molecule type" value="Genomic_DNA"/>
</dbReference>
<dbReference type="RefSeq" id="WP_011353961.1">
    <property type="nucleotide sequence ID" value="NC_007511.1"/>
</dbReference>
<dbReference type="SMR" id="Q39AP8"/>
<dbReference type="GeneID" id="45096731"/>
<dbReference type="KEGG" id="bur:Bcep18194_B0347"/>
<dbReference type="PATRIC" id="fig|482957.22.peg.3932"/>
<dbReference type="HOGENOM" id="CLU_027686_3_1_4"/>
<dbReference type="Proteomes" id="UP000002705">
    <property type="component" value="Chromosome 2"/>
</dbReference>
<dbReference type="GO" id="GO:0047304">
    <property type="term" value="F:2-aminoethylphosphonate-pyruvate transaminase activity"/>
    <property type="evidence" value="ECO:0007669"/>
    <property type="project" value="UniProtKB-UniRule"/>
</dbReference>
<dbReference type="GO" id="GO:0019700">
    <property type="term" value="P:organic phosphonate catabolic process"/>
    <property type="evidence" value="ECO:0007669"/>
    <property type="project" value="InterPro"/>
</dbReference>
<dbReference type="Gene3D" id="3.90.1150.10">
    <property type="entry name" value="Aspartate Aminotransferase, domain 1"/>
    <property type="match status" value="1"/>
</dbReference>
<dbReference type="Gene3D" id="3.40.640.10">
    <property type="entry name" value="Type I PLP-dependent aspartate aminotransferase-like (Major domain)"/>
    <property type="match status" value="1"/>
</dbReference>
<dbReference type="HAMAP" id="MF_01376">
    <property type="entry name" value="PhnW_aminotrans_5"/>
    <property type="match status" value="1"/>
</dbReference>
<dbReference type="InterPro" id="IPR000192">
    <property type="entry name" value="Aminotrans_V_dom"/>
</dbReference>
<dbReference type="InterPro" id="IPR012703">
    <property type="entry name" value="NH2EtPonate_pyrv_transaminase"/>
</dbReference>
<dbReference type="InterPro" id="IPR015424">
    <property type="entry name" value="PyrdxlP-dep_Trfase"/>
</dbReference>
<dbReference type="InterPro" id="IPR015421">
    <property type="entry name" value="PyrdxlP-dep_Trfase_major"/>
</dbReference>
<dbReference type="InterPro" id="IPR015422">
    <property type="entry name" value="PyrdxlP-dep_Trfase_small"/>
</dbReference>
<dbReference type="InterPro" id="IPR024169">
    <property type="entry name" value="SP_NH2Trfase/AEP_transaminase"/>
</dbReference>
<dbReference type="NCBIfam" id="TIGR03301">
    <property type="entry name" value="PhnW-AepZ"/>
    <property type="match status" value="1"/>
</dbReference>
<dbReference type="NCBIfam" id="NF010006">
    <property type="entry name" value="PRK13479.1"/>
    <property type="match status" value="1"/>
</dbReference>
<dbReference type="NCBIfam" id="TIGR02326">
    <property type="entry name" value="transamin_PhnW"/>
    <property type="match status" value="1"/>
</dbReference>
<dbReference type="PANTHER" id="PTHR42778">
    <property type="entry name" value="2-AMINOETHYLPHOSPHONATE--PYRUVATE TRANSAMINASE"/>
    <property type="match status" value="1"/>
</dbReference>
<dbReference type="PANTHER" id="PTHR42778:SF1">
    <property type="entry name" value="2-AMINOETHYLPHOSPHONATE--PYRUVATE TRANSAMINASE"/>
    <property type="match status" value="1"/>
</dbReference>
<dbReference type="Pfam" id="PF00266">
    <property type="entry name" value="Aminotran_5"/>
    <property type="match status" value="1"/>
</dbReference>
<dbReference type="PIRSF" id="PIRSF000524">
    <property type="entry name" value="SPT"/>
    <property type="match status" value="1"/>
</dbReference>
<dbReference type="SUPFAM" id="SSF53383">
    <property type="entry name" value="PLP-dependent transferases"/>
    <property type="match status" value="1"/>
</dbReference>
<reference key="1">
    <citation type="submission" date="2005-10" db="EMBL/GenBank/DDBJ databases">
        <title>Complete sequence of chromosome 2 of Burkholderia sp. 383.</title>
        <authorList>
            <consortium name="US DOE Joint Genome Institute"/>
            <person name="Copeland A."/>
            <person name="Lucas S."/>
            <person name="Lapidus A."/>
            <person name="Barry K."/>
            <person name="Detter J.C."/>
            <person name="Glavina T."/>
            <person name="Hammon N."/>
            <person name="Israni S."/>
            <person name="Pitluck S."/>
            <person name="Chain P."/>
            <person name="Malfatti S."/>
            <person name="Shin M."/>
            <person name="Vergez L."/>
            <person name="Schmutz J."/>
            <person name="Larimer F."/>
            <person name="Land M."/>
            <person name="Kyrpides N."/>
            <person name="Lykidis A."/>
            <person name="Richardson P."/>
        </authorList>
    </citation>
    <scope>NUCLEOTIDE SEQUENCE [LARGE SCALE GENOMIC DNA]</scope>
    <source>
        <strain>ATCC 17760 / DSM 23089 / LMG 22485 / NCIMB 9086 / R18194 / 383</strain>
    </source>
</reference>
<name>PHNW1_BURL3</name>
<organism>
    <name type="scientific">Burkholderia lata (strain ATCC 17760 / DSM 23089 / LMG 22485 / NCIMB 9086 / R18194 / 383)</name>
    <dbReference type="NCBI Taxonomy" id="482957"/>
    <lineage>
        <taxon>Bacteria</taxon>
        <taxon>Pseudomonadati</taxon>
        <taxon>Pseudomonadota</taxon>
        <taxon>Betaproteobacteria</taxon>
        <taxon>Burkholderiales</taxon>
        <taxon>Burkholderiaceae</taxon>
        <taxon>Burkholderia</taxon>
        <taxon>Burkholderia cepacia complex</taxon>
    </lineage>
</organism>